<feature type="chain" id="PRO_1000068215" description="Hydroxyacylglutathione hydrolase">
    <location>
        <begin position="1"/>
        <end position="251"/>
    </location>
</feature>
<feature type="binding site" evidence="1">
    <location>
        <position position="53"/>
    </location>
    <ligand>
        <name>Zn(2+)</name>
        <dbReference type="ChEBI" id="CHEBI:29105"/>
        <label>1</label>
    </ligand>
</feature>
<feature type="binding site" evidence="1">
    <location>
        <position position="55"/>
    </location>
    <ligand>
        <name>Zn(2+)</name>
        <dbReference type="ChEBI" id="CHEBI:29105"/>
        <label>1</label>
    </ligand>
</feature>
<feature type="binding site" evidence="1">
    <location>
        <position position="57"/>
    </location>
    <ligand>
        <name>Zn(2+)</name>
        <dbReference type="ChEBI" id="CHEBI:29105"/>
        <label>2</label>
    </ligand>
</feature>
<feature type="binding site" evidence="1">
    <location>
        <position position="58"/>
    </location>
    <ligand>
        <name>Zn(2+)</name>
        <dbReference type="ChEBI" id="CHEBI:29105"/>
        <label>2</label>
    </ligand>
</feature>
<feature type="binding site" evidence="1">
    <location>
        <position position="110"/>
    </location>
    <ligand>
        <name>Zn(2+)</name>
        <dbReference type="ChEBI" id="CHEBI:29105"/>
        <label>1</label>
    </ligand>
</feature>
<feature type="binding site" evidence="1">
    <location>
        <position position="127"/>
    </location>
    <ligand>
        <name>Zn(2+)</name>
        <dbReference type="ChEBI" id="CHEBI:29105"/>
        <label>1</label>
    </ligand>
</feature>
<feature type="binding site" evidence="1">
    <location>
        <position position="127"/>
    </location>
    <ligand>
        <name>Zn(2+)</name>
        <dbReference type="ChEBI" id="CHEBI:29105"/>
        <label>2</label>
    </ligand>
</feature>
<feature type="binding site" evidence="1">
    <location>
        <position position="165"/>
    </location>
    <ligand>
        <name>Zn(2+)</name>
        <dbReference type="ChEBI" id="CHEBI:29105"/>
        <label>2</label>
    </ligand>
</feature>
<keyword id="KW-0378">Hydrolase</keyword>
<keyword id="KW-0479">Metal-binding</keyword>
<keyword id="KW-1185">Reference proteome</keyword>
<keyword id="KW-0862">Zinc</keyword>
<sequence>MNLNSIPAFEDNYIWVLNDDEGKCLLVDPGEAEPVFRALEENQWQPVAILLTHHHHDHTGGVKALVARFPDITVYGPEETRSKGAQVVVNDGEKFNILGCEFLAFSTPGHTLGHFSYFSFPYLFCGDTMFSAGCGRLFEGTPAQMYQSFQKINALPEDTLICCAHEYTLSNLKFLVAILPDDPALTQYYREVNELRAKNQKTLPSILKNERQINLYLRLEDDDLIDKINPDLRLSTPEERFAWLRSKKDNF</sequence>
<dbReference type="EC" id="3.1.2.6" evidence="1"/>
<dbReference type="EMBL" id="CP000783">
    <property type="protein sequence ID" value="ABU78354.1"/>
    <property type="molecule type" value="Genomic_DNA"/>
</dbReference>
<dbReference type="RefSeq" id="WP_012125691.1">
    <property type="nucleotide sequence ID" value="NC_009778.1"/>
</dbReference>
<dbReference type="SMR" id="A7MI37"/>
<dbReference type="KEGG" id="esa:ESA_03127"/>
<dbReference type="PATRIC" id="fig|290339.8.peg.2764"/>
<dbReference type="HOGENOM" id="CLU_030571_4_1_6"/>
<dbReference type="UniPathway" id="UPA00619">
    <property type="reaction ID" value="UER00676"/>
</dbReference>
<dbReference type="Proteomes" id="UP000000260">
    <property type="component" value="Chromosome"/>
</dbReference>
<dbReference type="GO" id="GO:0004416">
    <property type="term" value="F:hydroxyacylglutathione hydrolase activity"/>
    <property type="evidence" value="ECO:0007669"/>
    <property type="project" value="UniProtKB-UniRule"/>
</dbReference>
<dbReference type="GO" id="GO:0046872">
    <property type="term" value="F:metal ion binding"/>
    <property type="evidence" value="ECO:0007669"/>
    <property type="project" value="UniProtKB-KW"/>
</dbReference>
<dbReference type="GO" id="GO:0019243">
    <property type="term" value="P:methylglyoxal catabolic process to D-lactate via S-lactoyl-glutathione"/>
    <property type="evidence" value="ECO:0007669"/>
    <property type="project" value="InterPro"/>
</dbReference>
<dbReference type="CDD" id="cd07723">
    <property type="entry name" value="hydroxyacylglutathione_hydrolase_MBL-fold"/>
    <property type="match status" value="1"/>
</dbReference>
<dbReference type="Gene3D" id="3.60.15.10">
    <property type="entry name" value="Ribonuclease Z/Hydroxyacylglutathione hydrolase-like"/>
    <property type="match status" value="1"/>
</dbReference>
<dbReference type="HAMAP" id="MF_01374">
    <property type="entry name" value="Glyoxalase_2"/>
    <property type="match status" value="1"/>
</dbReference>
<dbReference type="InterPro" id="IPR035680">
    <property type="entry name" value="Clx_II_MBL"/>
</dbReference>
<dbReference type="InterPro" id="IPR050110">
    <property type="entry name" value="Glyoxalase_II_hydrolase"/>
</dbReference>
<dbReference type="InterPro" id="IPR032282">
    <property type="entry name" value="HAGH_C"/>
</dbReference>
<dbReference type="InterPro" id="IPR017782">
    <property type="entry name" value="Hydroxyacylglutathione_Hdrlase"/>
</dbReference>
<dbReference type="InterPro" id="IPR001279">
    <property type="entry name" value="Metallo-B-lactamas"/>
</dbReference>
<dbReference type="InterPro" id="IPR036866">
    <property type="entry name" value="RibonucZ/Hydroxyglut_hydro"/>
</dbReference>
<dbReference type="NCBIfam" id="TIGR03413">
    <property type="entry name" value="GSH_gloB"/>
    <property type="match status" value="1"/>
</dbReference>
<dbReference type="NCBIfam" id="NF007597">
    <property type="entry name" value="PRK10241.1"/>
    <property type="match status" value="1"/>
</dbReference>
<dbReference type="PANTHER" id="PTHR43705">
    <property type="entry name" value="HYDROXYACYLGLUTATHIONE HYDROLASE"/>
    <property type="match status" value="1"/>
</dbReference>
<dbReference type="PANTHER" id="PTHR43705:SF1">
    <property type="entry name" value="HYDROXYACYLGLUTATHIONE HYDROLASE GLOB"/>
    <property type="match status" value="1"/>
</dbReference>
<dbReference type="Pfam" id="PF16123">
    <property type="entry name" value="HAGH_C"/>
    <property type="match status" value="1"/>
</dbReference>
<dbReference type="Pfam" id="PF00753">
    <property type="entry name" value="Lactamase_B"/>
    <property type="match status" value="1"/>
</dbReference>
<dbReference type="PIRSF" id="PIRSF005457">
    <property type="entry name" value="Glx"/>
    <property type="match status" value="1"/>
</dbReference>
<dbReference type="SMART" id="SM00849">
    <property type="entry name" value="Lactamase_B"/>
    <property type="match status" value="1"/>
</dbReference>
<dbReference type="SUPFAM" id="SSF56281">
    <property type="entry name" value="Metallo-hydrolase/oxidoreductase"/>
    <property type="match status" value="1"/>
</dbReference>
<proteinExistence type="inferred from homology"/>
<gene>
    <name evidence="1" type="primary">gloB</name>
    <name type="ordered locus">ESA_03127</name>
</gene>
<reference key="1">
    <citation type="journal article" date="2010" name="PLoS ONE">
        <title>Genome sequence of Cronobacter sakazakii BAA-894 and comparative genomic hybridization analysis with other Cronobacter species.</title>
        <authorList>
            <person name="Kucerova E."/>
            <person name="Clifton S.W."/>
            <person name="Xia X.Q."/>
            <person name="Long F."/>
            <person name="Porwollik S."/>
            <person name="Fulton L."/>
            <person name="Fronick C."/>
            <person name="Minx P."/>
            <person name="Kyung K."/>
            <person name="Warren W."/>
            <person name="Fulton R."/>
            <person name="Feng D."/>
            <person name="Wollam A."/>
            <person name="Shah N."/>
            <person name="Bhonagiri V."/>
            <person name="Nash W.E."/>
            <person name="Hallsworth-Pepin K."/>
            <person name="Wilson R.K."/>
            <person name="McClelland M."/>
            <person name="Forsythe S.J."/>
        </authorList>
    </citation>
    <scope>NUCLEOTIDE SEQUENCE [LARGE SCALE GENOMIC DNA]</scope>
    <source>
        <strain>ATCC BAA-894</strain>
    </source>
</reference>
<evidence type="ECO:0000255" key="1">
    <source>
        <dbReference type="HAMAP-Rule" id="MF_01374"/>
    </source>
</evidence>
<protein>
    <recommendedName>
        <fullName evidence="1">Hydroxyacylglutathione hydrolase</fullName>
        <ecNumber evidence="1">3.1.2.6</ecNumber>
    </recommendedName>
    <alternativeName>
        <fullName evidence="1">Glyoxalase II</fullName>
        <shortName evidence="1">Glx II</shortName>
    </alternativeName>
</protein>
<organism>
    <name type="scientific">Cronobacter sakazakii (strain ATCC BAA-894)</name>
    <name type="common">Enterobacter sakazakii</name>
    <dbReference type="NCBI Taxonomy" id="290339"/>
    <lineage>
        <taxon>Bacteria</taxon>
        <taxon>Pseudomonadati</taxon>
        <taxon>Pseudomonadota</taxon>
        <taxon>Gammaproteobacteria</taxon>
        <taxon>Enterobacterales</taxon>
        <taxon>Enterobacteriaceae</taxon>
        <taxon>Cronobacter</taxon>
    </lineage>
</organism>
<accession>A7MI37</accession>
<name>GLO2_CROS8</name>
<comment type="function">
    <text evidence="1">Thiolesterase that catalyzes the hydrolysis of S-D-lactoyl-glutathione to form glutathione and D-lactic acid.</text>
</comment>
<comment type="catalytic activity">
    <reaction evidence="1">
        <text>an S-(2-hydroxyacyl)glutathione + H2O = a 2-hydroxy carboxylate + glutathione + H(+)</text>
        <dbReference type="Rhea" id="RHEA:21864"/>
        <dbReference type="ChEBI" id="CHEBI:15377"/>
        <dbReference type="ChEBI" id="CHEBI:15378"/>
        <dbReference type="ChEBI" id="CHEBI:57925"/>
        <dbReference type="ChEBI" id="CHEBI:58896"/>
        <dbReference type="ChEBI" id="CHEBI:71261"/>
        <dbReference type="EC" id="3.1.2.6"/>
    </reaction>
</comment>
<comment type="cofactor">
    <cofactor evidence="1">
        <name>Zn(2+)</name>
        <dbReference type="ChEBI" id="CHEBI:29105"/>
    </cofactor>
    <text evidence="1">Binds 2 Zn(2+) ions per subunit.</text>
</comment>
<comment type="pathway">
    <text evidence="1">Secondary metabolite metabolism; methylglyoxal degradation; (R)-lactate from methylglyoxal: step 2/2.</text>
</comment>
<comment type="subunit">
    <text evidence="1">Monomer.</text>
</comment>
<comment type="similarity">
    <text evidence="1">Belongs to the metallo-beta-lactamase superfamily. Glyoxalase II family.</text>
</comment>